<protein>
    <recommendedName>
        <fullName>Cyclin-dependent kinase 4 inhibitor B</fullName>
    </recommendedName>
    <alternativeName>
        <fullName>Multiple tumor suppressor 2</fullName>
        <shortName>MTS-2</shortName>
    </alternativeName>
    <alternativeName>
        <fullName>p14-INK4b</fullName>
    </alternativeName>
    <alternativeName>
        <fullName>p15-INK4b</fullName>
        <shortName>p15INK4B</shortName>
    </alternativeName>
</protein>
<organism>
    <name type="scientific">Homo sapiens</name>
    <name type="common">Human</name>
    <dbReference type="NCBI Taxonomy" id="9606"/>
    <lineage>
        <taxon>Eukaryota</taxon>
        <taxon>Metazoa</taxon>
        <taxon>Chordata</taxon>
        <taxon>Craniata</taxon>
        <taxon>Vertebrata</taxon>
        <taxon>Euteleostomi</taxon>
        <taxon>Mammalia</taxon>
        <taxon>Eutheria</taxon>
        <taxon>Euarchontoglires</taxon>
        <taxon>Primates</taxon>
        <taxon>Haplorrhini</taxon>
        <taxon>Catarrhini</taxon>
        <taxon>Hominidae</taxon>
        <taxon>Homo</taxon>
    </lineage>
</organism>
<sequence>MREENKGMPSGGGSDEGLASAAARGLVEKVRQLLEAGADPNGVNRFGRRAIQVMMMGSARVAELLLLHGAEPNCADPATLTRPVHDAAREGFLDTLVVLHRAGARLDVRDAWGRLPVDLAEERGHRDVAGYLRTATGD</sequence>
<accession>P42772</accession>
<accession>O15125</accession>
<accession>Q6FI09</accession>
<comment type="function">
    <text>Interacts strongly with CDK4 and CDK6. Potent inhibitor. Potential effector of TGF-beta induced cell cycle arrest.</text>
</comment>
<comment type="subunit">
    <text>Heterodimer of CDKN2B with CDK4 or CDK6. Isoform 2 does not interact with CDK4 nor CDK6.</text>
</comment>
<comment type="interaction">
    <interactant intactId="EBI-711280">
        <id>P42772</id>
    </interactant>
    <interactant intactId="EBI-724719">
        <id>Q9UI12</id>
        <label>ATP6V1H</label>
    </interactant>
    <organismsDiffer>false</organismsDiffer>
    <experiments>3</experiments>
</comment>
<comment type="interaction">
    <interactant intactId="EBI-711280">
        <id>P42772</id>
    </interactant>
    <interactant intactId="EBI-395261">
        <id>P24863</id>
        <label>CCNC</label>
    </interactant>
    <organismsDiffer>false</organismsDiffer>
    <experiments>3</experiments>
</comment>
<comment type="interaction">
    <interactant intactId="EBI-711280">
        <id>P42772</id>
    </interactant>
    <interactant intactId="EBI-624648">
        <id>Q00537</id>
        <label>CDK17</label>
    </interactant>
    <organismsDiffer>false</organismsDiffer>
    <experiments>3</experiments>
</comment>
<comment type="interaction">
    <interactant intactId="EBI-711280">
        <id>P42772</id>
    </interactant>
    <interactant intactId="EBI-295644">
        <id>P11802</id>
        <label>CDK4</label>
    </interactant>
    <organismsDiffer>false</organismsDiffer>
    <experiments>22</experiments>
</comment>
<comment type="interaction">
    <interactant intactId="EBI-711280">
        <id>P42772</id>
    </interactant>
    <interactant intactId="EBI-295663">
        <id>Q00534</id>
        <label>CDK6</label>
    </interactant>
    <organismsDiffer>false</organismsDiffer>
    <experiments>19</experiments>
</comment>
<comment type="interaction">
    <interactant intactId="EBI-711280">
        <id>P42772</id>
    </interactant>
    <interactant intactId="EBI-10253274">
        <id>Q6P9H4</id>
        <label>CNKSR3</label>
    </interactant>
    <organismsDiffer>false</organismsDiffer>
    <experiments>3</experiments>
</comment>
<comment type="interaction">
    <interactant intactId="EBI-711280">
        <id>P42772</id>
    </interactant>
    <interactant intactId="EBI-6509505">
        <id>Q0VD86</id>
        <label>INCA1</label>
    </interactant>
    <organismsDiffer>false</organismsDiffer>
    <experiments>3</experiments>
</comment>
<comment type="interaction">
    <interactant intactId="EBI-711280">
        <id>P42772</id>
    </interactant>
    <interactant intactId="EBI-739552">
        <id>P43364</id>
        <label>MAGEA11</label>
    </interactant>
    <organismsDiffer>false</organismsDiffer>
    <experiments>4</experiments>
</comment>
<comment type="interaction">
    <interactant intactId="EBI-711280">
        <id>P42772</id>
    </interactant>
    <interactant intactId="EBI-740897">
        <id>Q9GZT8</id>
        <label>NIF3L1</label>
    </interactant>
    <organismsDiffer>false</organismsDiffer>
    <experiments>3</experiments>
</comment>
<comment type="interaction">
    <interactant intactId="EBI-711280">
        <id>P42772</id>
    </interactant>
    <interactant intactId="EBI-79165">
        <id>Q9NRD5</id>
        <label>PICK1</label>
    </interactant>
    <organismsDiffer>false</organismsDiffer>
    <experiments>3</experiments>
</comment>
<comment type="interaction">
    <interactant intactId="EBI-711280">
        <id>P42772</id>
    </interactant>
    <interactant intactId="EBI-2959680">
        <id>Q53H96</id>
        <label>PYCR3</label>
    </interactant>
    <organismsDiffer>false</organismsDiffer>
    <experiments>3</experiments>
</comment>
<comment type="interaction">
    <interactant intactId="EBI-711280">
        <id>P42772</id>
    </interactant>
    <interactant intactId="EBI-10174072">
        <id>A6ZKI3</id>
        <label>RTL8C</label>
    </interactant>
    <organismsDiffer>false</organismsDiffer>
    <experiments>3</experiments>
</comment>
<comment type="interaction">
    <interactant intactId="EBI-711280">
        <id>P42772</id>
    </interactant>
    <interactant intactId="EBI-6257312">
        <id>Q9BVN2</id>
        <label>RUSC1</label>
    </interactant>
    <organismsDiffer>false</organismsDiffer>
    <experiments>3</experiments>
</comment>
<comment type="interaction">
    <interactant intactId="EBI-711280">
        <id>P42772</id>
    </interactant>
    <interactant intactId="EBI-742688">
        <id>Q9NZD8</id>
        <label>SPG21</label>
    </interactant>
    <organismsDiffer>false</organismsDiffer>
    <experiments>6</experiments>
</comment>
<comment type="interaction">
    <interactant intactId="EBI-711280">
        <id>P42772</id>
    </interactant>
    <interactant intactId="EBI-359224">
        <id>Q13077</id>
        <label>TRAF1</label>
    </interactant>
    <organismsDiffer>false</organismsDiffer>
    <experiments>7</experiments>
</comment>
<comment type="subcellular location">
    <subcellularLocation>
        <location evidence="2">Cytoplasm</location>
    </subcellularLocation>
    <text>Also found in the nucleus.</text>
</comment>
<comment type="alternative products">
    <event type="alternative splicing"/>
    <isoform>
        <id>P42772-1</id>
        <name>1</name>
        <name>p15</name>
        <sequence type="displayed"/>
    </isoform>
    <isoform>
        <id>P42772-2</id>
        <name>2</name>
        <name>p10</name>
        <sequence type="described" ref="VSP_043898"/>
    </isoform>
</comment>
<comment type="tissue specificity">
    <text evidence="2">Isoform 2 is expressed in normal (keratinocytes, fibroblasts) and tumor cell lines.</text>
</comment>
<comment type="similarity">
    <text evidence="4">Belongs to the CDKN2 cyclin-dependent kinase inhibitor family.</text>
</comment>
<comment type="online information" name="Atlas of Genetics and Cytogenetics in Oncology and Haematology">
    <link uri="https://atlasgeneticsoncology.org/gene/187/CDKN2B"/>
</comment>
<proteinExistence type="evidence at protein level"/>
<dbReference type="EMBL" id="U17075">
    <property type="protein sequence ID" value="AAC50075.1"/>
    <property type="molecule type" value="mRNA"/>
</dbReference>
<dbReference type="EMBL" id="L36844">
    <property type="protein sequence ID" value="AAA50282.1"/>
    <property type="molecule type" value="mRNA"/>
</dbReference>
<dbReference type="EMBL" id="AF004819">
    <property type="protein sequence ID" value="AAB69989.1"/>
    <property type="molecule type" value="mRNA"/>
</dbReference>
<dbReference type="EMBL" id="CR536529">
    <property type="protein sequence ID" value="CAG38766.1"/>
    <property type="molecule type" value="mRNA"/>
</dbReference>
<dbReference type="EMBL" id="AF513858">
    <property type="protein sequence ID" value="AAM44859.1"/>
    <property type="molecule type" value="Genomic_DNA"/>
</dbReference>
<dbReference type="EMBL" id="AL449423">
    <property type="status" value="NOT_ANNOTATED_CDS"/>
    <property type="molecule type" value="Genomic_DNA"/>
</dbReference>
<dbReference type="EMBL" id="BC014469">
    <property type="protein sequence ID" value="AAH14469.1"/>
    <property type="molecule type" value="mRNA"/>
</dbReference>
<dbReference type="EMBL" id="S69805">
    <property type="protein sequence ID" value="AAD14049.1"/>
    <property type="molecule type" value="Genomic_DNA"/>
</dbReference>
<dbReference type="CCDS" id="CCDS6512.1">
    <molecule id="P42772-1"/>
</dbReference>
<dbReference type="CCDS" id="CCDS6513.1">
    <molecule id="P42772-2"/>
</dbReference>
<dbReference type="PIR" id="B55479">
    <property type="entry name" value="B55479"/>
</dbReference>
<dbReference type="RefSeq" id="NP_004927.2">
    <molecule id="P42772-1"/>
    <property type="nucleotide sequence ID" value="NM_004936.3"/>
</dbReference>
<dbReference type="RefSeq" id="NP_511042.1">
    <molecule id="P42772-2"/>
    <property type="nucleotide sequence ID" value="NM_078487.2"/>
</dbReference>
<dbReference type="SMR" id="P42772"/>
<dbReference type="BioGRID" id="107464">
    <property type="interactions" value="73"/>
</dbReference>
<dbReference type="FunCoup" id="P42772">
    <property type="interactions" value="1638"/>
</dbReference>
<dbReference type="IntAct" id="P42772">
    <property type="interactions" value="23"/>
</dbReference>
<dbReference type="MINT" id="P42772"/>
<dbReference type="STRING" id="9606.ENSP00000276925"/>
<dbReference type="iPTMnet" id="P42772"/>
<dbReference type="PhosphoSitePlus" id="P42772"/>
<dbReference type="BioMuta" id="CDKN2B"/>
<dbReference type="DMDM" id="1168869"/>
<dbReference type="jPOST" id="P42772"/>
<dbReference type="MassIVE" id="P42772"/>
<dbReference type="PaxDb" id="9606-ENSP00000276925"/>
<dbReference type="PeptideAtlas" id="P42772"/>
<dbReference type="ProteomicsDB" id="55555">
    <molecule id="P42772-1"/>
</dbReference>
<dbReference type="ProteomicsDB" id="55556">
    <molecule id="P42772-2"/>
</dbReference>
<dbReference type="Pumba" id="P42772"/>
<dbReference type="Antibodypedia" id="3605">
    <property type="antibodies" value="624 antibodies from 37 providers"/>
</dbReference>
<dbReference type="DNASU" id="1030"/>
<dbReference type="Ensembl" id="ENST00000276925.7">
    <molecule id="P42772-1"/>
    <property type="protein sequence ID" value="ENSP00000276925.6"/>
    <property type="gene ID" value="ENSG00000147883.12"/>
</dbReference>
<dbReference type="Ensembl" id="ENST00000380142.5">
    <molecule id="P42772-2"/>
    <property type="protein sequence ID" value="ENSP00000369487.4"/>
    <property type="gene ID" value="ENSG00000147883.12"/>
</dbReference>
<dbReference type="GeneID" id="1030"/>
<dbReference type="KEGG" id="hsa:1030"/>
<dbReference type="MANE-Select" id="ENST00000276925.7">
    <property type="protein sequence ID" value="ENSP00000276925.6"/>
    <property type="RefSeq nucleotide sequence ID" value="NM_004936.4"/>
    <property type="RefSeq protein sequence ID" value="NP_004927.2"/>
</dbReference>
<dbReference type="UCSC" id="uc003zpn.4">
    <molecule id="P42772-1"/>
    <property type="organism name" value="human"/>
</dbReference>
<dbReference type="AGR" id="HGNC:1788"/>
<dbReference type="CTD" id="1030"/>
<dbReference type="DisGeNET" id="1030"/>
<dbReference type="GeneCards" id="CDKN2B"/>
<dbReference type="HGNC" id="HGNC:1788">
    <property type="gene designation" value="CDKN2B"/>
</dbReference>
<dbReference type="HPA" id="ENSG00000147883">
    <property type="expression patterns" value="Tissue enhanced (esophagus, intestine)"/>
</dbReference>
<dbReference type="MalaCards" id="CDKN2B"/>
<dbReference type="MIM" id="600431">
    <property type="type" value="gene"/>
</dbReference>
<dbReference type="neXtProt" id="NX_P42772"/>
<dbReference type="OpenTargets" id="ENSG00000147883"/>
<dbReference type="Orphanet" id="618">
    <property type="disease" value="Familial melanoma"/>
</dbReference>
<dbReference type="Orphanet" id="652">
    <property type="disease" value="Multiple endocrine neoplasia type 1"/>
</dbReference>
<dbReference type="PharmGKB" id="PA26321"/>
<dbReference type="VEuPathDB" id="HostDB:ENSG00000147883"/>
<dbReference type="eggNOG" id="KOG0504">
    <property type="taxonomic scope" value="Eukaryota"/>
</dbReference>
<dbReference type="GeneTree" id="ENSGT00940000162423"/>
<dbReference type="HOGENOM" id="CLU_000134_37_1_1"/>
<dbReference type="InParanoid" id="P42772"/>
<dbReference type="OMA" id="SALQVMM"/>
<dbReference type="OrthoDB" id="539213at2759"/>
<dbReference type="PAN-GO" id="P42772">
    <property type="GO annotations" value="7 GO annotations based on evolutionary models"/>
</dbReference>
<dbReference type="PhylomeDB" id="P42772"/>
<dbReference type="TreeFam" id="TF352389"/>
<dbReference type="PathwayCommons" id="P42772"/>
<dbReference type="Reactome" id="R-HSA-2173796">
    <property type="pathway name" value="SMAD2/SMAD3:SMAD4 heterotrimer regulates transcription"/>
</dbReference>
<dbReference type="Reactome" id="R-HSA-2559580">
    <property type="pathway name" value="Oxidative Stress Induced Senescence"/>
</dbReference>
<dbReference type="Reactome" id="R-HSA-2559582">
    <property type="pathway name" value="Senescence-Associated Secretory Phenotype (SASP)"/>
</dbReference>
<dbReference type="Reactome" id="R-HSA-2559585">
    <property type="pathway name" value="Oncogene Induced Senescence"/>
</dbReference>
<dbReference type="Reactome" id="R-HSA-69231">
    <property type="pathway name" value="Cyclin D associated events in G1"/>
</dbReference>
<dbReference type="SignaLink" id="P42772"/>
<dbReference type="SIGNOR" id="P42772"/>
<dbReference type="BioGRID-ORCS" id="1030">
    <property type="hits" value="23 hits in 1175 CRISPR screens"/>
</dbReference>
<dbReference type="GeneWiki" id="CDKN2B"/>
<dbReference type="GenomeRNAi" id="1030"/>
<dbReference type="Pharos" id="P42772">
    <property type="development level" value="Tbio"/>
</dbReference>
<dbReference type="PRO" id="PR:P42772"/>
<dbReference type="Proteomes" id="UP000005640">
    <property type="component" value="Chromosome 9"/>
</dbReference>
<dbReference type="RNAct" id="P42772">
    <property type="molecule type" value="protein"/>
</dbReference>
<dbReference type="Bgee" id="ENSG00000147883">
    <property type="expression patterns" value="Expressed in jejunal mucosa and 151 other cell types or tissues"/>
</dbReference>
<dbReference type="ExpressionAtlas" id="P42772">
    <property type="expression patterns" value="baseline and differential"/>
</dbReference>
<dbReference type="GO" id="GO:0005737">
    <property type="term" value="C:cytoplasm"/>
    <property type="evidence" value="ECO:0000314"/>
    <property type="project" value="UniProtKB"/>
</dbReference>
<dbReference type="GO" id="GO:0005829">
    <property type="term" value="C:cytosol"/>
    <property type="evidence" value="ECO:0000304"/>
    <property type="project" value="Reactome"/>
</dbReference>
<dbReference type="GO" id="GO:0005634">
    <property type="term" value="C:nucleus"/>
    <property type="evidence" value="ECO:0000314"/>
    <property type="project" value="UniProtKB"/>
</dbReference>
<dbReference type="GO" id="GO:0004861">
    <property type="term" value="F:cyclin-dependent protein serine/threonine kinase inhibitor activity"/>
    <property type="evidence" value="ECO:0000314"/>
    <property type="project" value="BHF-UCL"/>
</dbReference>
<dbReference type="GO" id="GO:0019901">
    <property type="term" value="F:protein kinase binding"/>
    <property type="evidence" value="ECO:0000353"/>
    <property type="project" value="BHF-UCL"/>
</dbReference>
<dbReference type="GO" id="GO:0071460">
    <property type="term" value="P:cellular response to cell-matrix adhesion"/>
    <property type="evidence" value="ECO:0000315"/>
    <property type="project" value="BHF-UCL"/>
</dbReference>
<dbReference type="GO" id="GO:0031670">
    <property type="term" value="P:cellular response to nutrient"/>
    <property type="evidence" value="ECO:0000315"/>
    <property type="project" value="BHF-UCL"/>
</dbReference>
<dbReference type="GO" id="GO:0090398">
    <property type="term" value="P:cellular senescence"/>
    <property type="evidence" value="ECO:0000315"/>
    <property type="project" value="BHF-UCL"/>
</dbReference>
<dbReference type="GO" id="GO:0030219">
    <property type="term" value="P:megakaryocyte differentiation"/>
    <property type="evidence" value="ECO:0000270"/>
    <property type="project" value="UniProtKB"/>
</dbReference>
<dbReference type="GO" id="GO:0008285">
    <property type="term" value="P:negative regulation of cell population proliferation"/>
    <property type="evidence" value="ECO:0000315"/>
    <property type="project" value="BHF-UCL"/>
</dbReference>
<dbReference type="GO" id="GO:0050680">
    <property type="term" value="P:negative regulation of epithelial cell proliferation"/>
    <property type="evidence" value="ECO:0000315"/>
    <property type="project" value="BHF-UCL"/>
</dbReference>
<dbReference type="GO" id="GO:2000134">
    <property type="term" value="P:negative regulation of G1/S transition of mitotic cell cycle"/>
    <property type="evidence" value="ECO:0000314"/>
    <property type="project" value="BHF-UCL"/>
</dbReference>
<dbReference type="GO" id="GO:0030511">
    <property type="term" value="P:positive regulation of transforming growth factor beta receptor signaling pathway"/>
    <property type="evidence" value="ECO:0000315"/>
    <property type="project" value="BHF-UCL"/>
</dbReference>
<dbReference type="GO" id="GO:0070316">
    <property type="term" value="P:regulation of G0 to G1 transition"/>
    <property type="evidence" value="ECO:0000315"/>
    <property type="project" value="BHF-UCL"/>
</dbReference>
<dbReference type="GO" id="GO:2000045">
    <property type="term" value="P:regulation of G1/S transition of mitotic cell cycle"/>
    <property type="evidence" value="ECO:0000318"/>
    <property type="project" value="GO_Central"/>
</dbReference>
<dbReference type="GO" id="GO:0048536">
    <property type="term" value="P:spleen development"/>
    <property type="evidence" value="ECO:0007669"/>
    <property type="project" value="Ensembl"/>
</dbReference>
<dbReference type="GO" id="GO:0007179">
    <property type="term" value="P:transforming growth factor beta receptor signaling pathway"/>
    <property type="evidence" value="ECO:0000314"/>
    <property type="project" value="BHF-UCL"/>
</dbReference>
<dbReference type="FunFam" id="1.25.40.20:FF:000107">
    <property type="entry name" value="cyclin-dependent kinase 4 inhibitor B"/>
    <property type="match status" value="1"/>
</dbReference>
<dbReference type="Gene3D" id="1.25.40.20">
    <property type="entry name" value="Ankyrin repeat-containing domain"/>
    <property type="match status" value="1"/>
</dbReference>
<dbReference type="InterPro" id="IPR050776">
    <property type="entry name" value="Ank_Repeat/CDKN_Inhibitor"/>
</dbReference>
<dbReference type="InterPro" id="IPR002110">
    <property type="entry name" value="Ankyrin_rpt"/>
</dbReference>
<dbReference type="InterPro" id="IPR036770">
    <property type="entry name" value="Ankyrin_rpt-contain_sf"/>
</dbReference>
<dbReference type="PANTHER" id="PTHR24201">
    <property type="entry name" value="ANK_REP_REGION DOMAIN-CONTAINING PROTEIN"/>
    <property type="match status" value="1"/>
</dbReference>
<dbReference type="PANTHER" id="PTHR24201:SF8">
    <property type="entry name" value="CYCLIN-DEPENDENT KINASE 4 INHIBITOR B"/>
    <property type="match status" value="1"/>
</dbReference>
<dbReference type="Pfam" id="PF12796">
    <property type="entry name" value="Ank_2"/>
    <property type="match status" value="1"/>
</dbReference>
<dbReference type="SUPFAM" id="SSF48403">
    <property type="entry name" value="Ankyrin repeat"/>
    <property type="match status" value="1"/>
</dbReference>
<dbReference type="PROSITE" id="PS50297">
    <property type="entry name" value="ANK_REP_REGION"/>
    <property type="match status" value="1"/>
</dbReference>
<evidence type="ECO:0000269" key="1">
    <source>
    </source>
</evidence>
<evidence type="ECO:0000269" key="2">
    <source>
    </source>
</evidence>
<evidence type="ECO:0000303" key="3">
    <source>
    </source>
</evidence>
<evidence type="ECO:0000305" key="4"/>
<gene>
    <name type="primary">CDKN2B</name>
    <name type="synonym">MTS2</name>
</gene>
<reference key="1">
    <citation type="journal article" date="1994" name="Genes Dev.">
        <title>Growth suppression by p18, a p16INK4/MTS1- and p14INK4B/MTS2-related CDK6 inhibitor, correlates with wild-type pRb function.</title>
        <authorList>
            <person name="Guan K.-L."/>
            <person name="Jenkins C.W."/>
            <person name="Li Y."/>
            <person name="Nichols M.A."/>
            <person name="Wu X."/>
            <person name="O'Keefe C.L."/>
            <person name="Matera G.A."/>
            <person name="Xiong Y."/>
        </authorList>
    </citation>
    <scope>NUCLEOTIDE SEQUENCE [MRNA] (ISOFORM 1)</scope>
</reference>
<reference key="2">
    <citation type="journal article" date="1994" name="Nature">
        <title>p15INK4B is a potential effector of TGF-beta-induced cell cycle arrest.</title>
        <authorList>
            <person name="Hannon G.J."/>
            <person name="Beach D."/>
        </authorList>
    </citation>
    <scope>NUCLEOTIDE SEQUENCE [MRNA] (ISOFORM 1)</scope>
</reference>
<reference key="3">
    <citation type="journal article" date="1997" name="Cancer Res.">
        <title>Cloning and characterization of p10, an alternatively spliced form of p15 cyclin-dependent kinase inhibitor.</title>
        <authorList>
            <person name="Tsubari M."/>
            <person name="Tiihonen E."/>
            <person name="Laiho M."/>
        </authorList>
    </citation>
    <scope>NUCLEOTIDE SEQUENCE [MRNA] (ISOFORM 2)</scope>
    <scope>SUBCELLULAR LOCATION</scope>
    <scope>TISSUE SPECIFICITY</scope>
</reference>
<reference key="4">
    <citation type="submission" date="2004-06" db="EMBL/GenBank/DDBJ databases">
        <title>Cloning of human full open reading frames in Gateway(TM) system entry vector (pDONR201).</title>
        <authorList>
            <person name="Halleck A."/>
            <person name="Ebert L."/>
            <person name="Mkoundinya M."/>
            <person name="Schick M."/>
            <person name="Eisenstein S."/>
            <person name="Neubert P."/>
            <person name="Kstrang K."/>
            <person name="Schatten R."/>
            <person name="Shen B."/>
            <person name="Henze S."/>
            <person name="Mar W."/>
            <person name="Korn B."/>
            <person name="Zuo D."/>
            <person name="Hu Y."/>
            <person name="LaBaer J."/>
        </authorList>
    </citation>
    <scope>NUCLEOTIDE SEQUENCE [LARGE SCALE MRNA] (ISOFORM 1)</scope>
</reference>
<reference key="5">
    <citation type="submission" date="2002-05" db="EMBL/GenBank/DDBJ databases">
        <authorList>
            <consortium name="NIEHS SNPs program"/>
        </authorList>
    </citation>
    <scope>NUCLEOTIDE SEQUENCE [GENOMIC DNA]</scope>
</reference>
<reference key="6">
    <citation type="journal article" date="2004" name="Nature">
        <title>DNA sequence and analysis of human chromosome 9.</title>
        <authorList>
            <person name="Humphray S.J."/>
            <person name="Oliver K."/>
            <person name="Hunt A.R."/>
            <person name="Plumb R.W."/>
            <person name="Loveland J.E."/>
            <person name="Howe K.L."/>
            <person name="Andrews T.D."/>
            <person name="Searle S."/>
            <person name="Hunt S.E."/>
            <person name="Scott C.E."/>
            <person name="Jones M.C."/>
            <person name="Ainscough R."/>
            <person name="Almeida J.P."/>
            <person name="Ambrose K.D."/>
            <person name="Ashwell R.I.S."/>
            <person name="Babbage A.K."/>
            <person name="Babbage S."/>
            <person name="Bagguley C.L."/>
            <person name="Bailey J."/>
            <person name="Banerjee R."/>
            <person name="Barker D.J."/>
            <person name="Barlow K.F."/>
            <person name="Bates K."/>
            <person name="Beasley H."/>
            <person name="Beasley O."/>
            <person name="Bird C.P."/>
            <person name="Bray-Allen S."/>
            <person name="Brown A.J."/>
            <person name="Brown J.Y."/>
            <person name="Burford D."/>
            <person name="Burrill W."/>
            <person name="Burton J."/>
            <person name="Carder C."/>
            <person name="Carter N.P."/>
            <person name="Chapman J.C."/>
            <person name="Chen Y."/>
            <person name="Clarke G."/>
            <person name="Clark S.Y."/>
            <person name="Clee C.M."/>
            <person name="Clegg S."/>
            <person name="Collier R.E."/>
            <person name="Corby N."/>
            <person name="Crosier M."/>
            <person name="Cummings A.T."/>
            <person name="Davies J."/>
            <person name="Dhami P."/>
            <person name="Dunn M."/>
            <person name="Dutta I."/>
            <person name="Dyer L.W."/>
            <person name="Earthrowl M.E."/>
            <person name="Faulkner L."/>
            <person name="Fleming C.J."/>
            <person name="Frankish A."/>
            <person name="Frankland J.A."/>
            <person name="French L."/>
            <person name="Fricker D.G."/>
            <person name="Garner P."/>
            <person name="Garnett J."/>
            <person name="Ghori J."/>
            <person name="Gilbert J.G.R."/>
            <person name="Glison C."/>
            <person name="Grafham D.V."/>
            <person name="Gribble S."/>
            <person name="Griffiths C."/>
            <person name="Griffiths-Jones S."/>
            <person name="Grocock R."/>
            <person name="Guy J."/>
            <person name="Hall R.E."/>
            <person name="Hammond S."/>
            <person name="Harley J.L."/>
            <person name="Harrison E.S.I."/>
            <person name="Hart E.A."/>
            <person name="Heath P.D."/>
            <person name="Henderson C.D."/>
            <person name="Hopkins B.L."/>
            <person name="Howard P.J."/>
            <person name="Howden P.J."/>
            <person name="Huckle E."/>
            <person name="Johnson C."/>
            <person name="Johnson D."/>
            <person name="Joy A.A."/>
            <person name="Kay M."/>
            <person name="Keenan S."/>
            <person name="Kershaw J.K."/>
            <person name="Kimberley A.M."/>
            <person name="King A."/>
            <person name="Knights A."/>
            <person name="Laird G.K."/>
            <person name="Langford C."/>
            <person name="Lawlor S."/>
            <person name="Leongamornlert D.A."/>
            <person name="Leversha M."/>
            <person name="Lloyd C."/>
            <person name="Lloyd D.M."/>
            <person name="Lovell J."/>
            <person name="Martin S."/>
            <person name="Mashreghi-Mohammadi M."/>
            <person name="Matthews L."/>
            <person name="McLaren S."/>
            <person name="McLay K.E."/>
            <person name="McMurray A."/>
            <person name="Milne S."/>
            <person name="Nickerson T."/>
            <person name="Nisbett J."/>
            <person name="Nordsiek G."/>
            <person name="Pearce A.V."/>
            <person name="Peck A.I."/>
            <person name="Porter K.M."/>
            <person name="Pandian R."/>
            <person name="Pelan S."/>
            <person name="Phillimore B."/>
            <person name="Povey S."/>
            <person name="Ramsey Y."/>
            <person name="Rand V."/>
            <person name="Scharfe M."/>
            <person name="Sehra H.K."/>
            <person name="Shownkeen R."/>
            <person name="Sims S.K."/>
            <person name="Skuce C.D."/>
            <person name="Smith M."/>
            <person name="Steward C.A."/>
            <person name="Swarbreck D."/>
            <person name="Sycamore N."/>
            <person name="Tester J."/>
            <person name="Thorpe A."/>
            <person name="Tracey A."/>
            <person name="Tromans A."/>
            <person name="Thomas D.W."/>
            <person name="Wall M."/>
            <person name="Wallis J.M."/>
            <person name="West A.P."/>
            <person name="Whitehead S.L."/>
            <person name="Willey D.L."/>
            <person name="Williams S.A."/>
            <person name="Wilming L."/>
            <person name="Wray P.W."/>
            <person name="Young L."/>
            <person name="Ashurst J.L."/>
            <person name="Coulson A."/>
            <person name="Blocker H."/>
            <person name="Durbin R.M."/>
            <person name="Sulston J.E."/>
            <person name="Hubbard T."/>
            <person name="Jackson M.J."/>
            <person name="Bentley D.R."/>
            <person name="Beck S."/>
            <person name="Rogers J."/>
            <person name="Dunham I."/>
        </authorList>
    </citation>
    <scope>NUCLEOTIDE SEQUENCE [LARGE SCALE GENOMIC DNA]</scope>
</reference>
<reference key="7">
    <citation type="journal article" date="2004" name="Genome Res.">
        <title>The status, quality, and expansion of the NIH full-length cDNA project: the Mammalian Gene Collection (MGC).</title>
        <authorList>
            <consortium name="The MGC Project Team"/>
        </authorList>
    </citation>
    <scope>NUCLEOTIDE SEQUENCE [LARGE SCALE MRNA] (ISOFORM 1)</scope>
    <source>
        <tissue>Skin</tissue>
    </source>
</reference>
<reference key="8">
    <citation type="journal article" date="1994" name="Science">
        <title>A cell cycle regulator potentially involved in genesis of many tumor types.</title>
        <authorList>
            <person name="Kamb A."/>
            <person name="Gruis N.A."/>
            <person name="Weaver-Feldhaus J."/>
            <person name="Liu Q."/>
            <person name="Harshman K."/>
            <person name="Tavtigian S.V."/>
            <person name="Stockert E."/>
            <person name="Day R.S. III"/>
            <person name="Johnson B.E."/>
            <person name="Skolnick M.H."/>
        </authorList>
    </citation>
    <scope>NUCLEOTIDE SEQUENCE [GENOMIC DNA] OF 53-138</scope>
</reference>
<reference key="9">
    <citation type="journal article" date="2000" name="Protein Sci.">
        <title>Tumor suppressor INK4: refinement of p16INK4A structure and determination of p15INK4B structure by comparative modeling and NMR data.</title>
        <authorList>
            <person name="Yuan C."/>
            <person name="Selby T.L."/>
            <person name="Li J."/>
            <person name="Byeon I.J."/>
            <person name="Tsai M.D."/>
        </authorList>
    </citation>
    <scope>STRUCTURE BY NMR</scope>
</reference>
<reference key="10">
    <citation type="journal article" date="1995" name="Cancer Res.">
        <title>Mutations in the p16INK4/MTS1/CDKN2, p15INK4B/MTS2, and p18 genes in primary and metastatic lung cancer.</title>
        <authorList>
            <person name="Okamoto A."/>
            <person name="Hussain S.P."/>
            <person name="Hagiwara K."/>
            <person name="Spillare E.A."/>
            <person name="Rusin M.R."/>
            <person name="Demetrick D.J."/>
            <person name="Serrano M."/>
            <person name="Hannon G.J."/>
            <person name="Shiseki M."/>
            <person name="Zariwala M."/>
            <person name="Xiong Y."/>
            <person name="Beach D.H."/>
            <person name="Yokota J."/>
            <person name="Harris C.C."/>
        </authorList>
    </citation>
    <scope>VARIANTS LUNG ADENOCARCINOMA GLU-47 AND VAL-50</scope>
</reference>
<name>CDN2B_HUMAN</name>
<feature type="chain" id="PRO_0000144184" description="Cyclin-dependent kinase 4 inhibitor B">
    <location>
        <begin position="1"/>
        <end position="138"/>
    </location>
</feature>
<feature type="repeat" description="ANK 1; truncated">
    <location>
        <begin position="13"/>
        <end position="39"/>
    </location>
</feature>
<feature type="repeat" description="ANK 2">
    <location>
        <begin position="46"/>
        <end position="74"/>
    </location>
</feature>
<feature type="repeat" description="ANK 3">
    <location>
        <begin position="79"/>
        <end position="108"/>
    </location>
</feature>
<feature type="repeat" description="ANK 4">
    <location>
        <begin position="112"/>
        <end position="138"/>
    </location>
</feature>
<feature type="splice variant" id="VSP_043898" description="In isoform 2." evidence="3">
    <original>MMMGSARVAELLLLHGAEPNCADPATLTRPVHDAAREGFLDTLVVLHRAGARLDVRDAWGRLPVDLAEERGHRDVAGYLRTATGD</original>
    <variation>AGAPGPRRQGARERGARPRRIGAGT</variation>
    <location>
        <begin position="54"/>
        <end position="138"/>
    </location>
</feature>
<feature type="sequence variant" id="VAR_001488" description="In lung adenocarcinoma; dbSNP:rs2131189971." evidence="1">
    <original>G</original>
    <variation>E</variation>
    <location>
        <position position="47"/>
    </location>
</feature>
<feature type="sequence variant" id="VAR_001489" description="In lung adenocarcinoma; dbSNP:rs1423790481." evidence="1">
    <original>A</original>
    <variation>V</variation>
    <location>
        <position position="50"/>
    </location>
</feature>
<feature type="sequence conflict" description="In Ref. 2; AAA50282." evidence="4" ref="2">
    <original>SAA</original>
    <variation>TP</variation>
    <location>
        <begin position="20"/>
        <end position="22"/>
    </location>
</feature>
<feature type="sequence conflict" description="In Ref. 2; AAA50282." evidence="4" ref="2">
    <original>QLL</original>
    <variation>HSW</variation>
    <location>
        <begin position="32"/>
        <end position="34"/>
    </location>
</feature>
<keyword id="KW-0025">Alternative splicing</keyword>
<keyword id="KW-0040">ANK repeat</keyword>
<keyword id="KW-0131">Cell cycle</keyword>
<keyword id="KW-0963">Cytoplasm</keyword>
<keyword id="KW-1267">Proteomics identification</keyword>
<keyword id="KW-1185">Reference proteome</keyword>
<keyword id="KW-0677">Repeat</keyword>
<keyword id="KW-0043">Tumor suppressor</keyword>